<proteinExistence type="evidence at protein level"/>
<protein>
    <recommendedName>
        <fullName>Low affinity immunoglobulin gamma Fc region receptor III-B</fullName>
    </recommendedName>
    <alternativeName>
        <fullName>Fc-gamma RIII-beta</fullName>
        <shortName evidence="13">CD16-I</shortName>
        <shortName>Fc-gamma RIII</shortName>
        <shortName>Fc-gamma RIIIb</shortName>
        <shortName>FcRIII</shortName>
        <shortName>FcRIIIb</shortName>
    </alternativeName>
    <alternativeName>
        <fullName>FcR-10</fullName>
    </alternativeName>
    <alternativeName>
        <fullName>IgG Fc receptor III-1</fullName>
    </alternativeName>
    <cdAntigenName>CD16b</cdAntigenName>
</protein>
<feature type="signal peptide" evidence="2">
    <location>
        <begin position="1"/>
        <end position="16"/>
    </location>
</feature>
<feature type="chain" id="PRO_0000015151" description="Low affinity immunoglobulin gamma Fc region receptor III-B">
    <location>
        <begin position="17"/>
        <end position="200"/>
    </location>
</feature>
<feature type="propeptide" id="PRO_0000015152" description="Removed in mature form" evidence="2">
    <location>
        <begin position="201"/>
        <end position="233"/>
    </location>
</feature>
<feature type="domain" description="Ig-like C2-type 1">
    <location>
        <begin position="40"/>
        <end position="96"/>
    </location>
</feature>
<feature type="domain" description="Ig-like C2-type 2">
    <location>
        <begin position="121"/>
        <end position="179"/>
    </location>
</feature>
<feature type="lipid moiety-binding region" description="GPI-anchor amidated serine" evidence="2">
    <location>
        <position position="200"/>
    </location>
</feature>
<feature type="glycosylation site" description="N-linked (GlcNAc...) asparagine" evidence="2">
    <location>
        <position position="56"/>
    </location>
</feature>
<feature type="glycosylation site" description="N-linked (GlcNAc...) asparagine" evidence="2">
    <location>
        <position position="63"/>
    </location>
</feature>
<feature type="glycosylation site" description="N-linked (GlcNAc...) asparagine" evidence="2">
    <location>
        <position position="82"/>
    </location>
</feature>
<feature type="glycosylation site" description="N-linked (GlcNAc...) asparagine" evidence="2">
    <location>
        <position position="92"/>
    </location>
</feature>
<feature type="glycosylation site" description="N-linked (GlcNAc...) asparagine" evidence="2">
    <location>
        <position position="180"/>
    </location>
</feature>
<feature type="glycosylation site" description="N-linked (GlcNAc...) asparagine" evidence="2">
    <location>
        <position position="187"/>
    </location>
</feature>
<feature type="disulfide bond" evidence="3 4 14">
    <location>
        <begin position="47"/>
        <end position="89"/>
    </location>
</feature>
<feature type="disulfide bond" evidence="3 4 14">
    <location>
        <begin position="128"/>
        <end position="172"/>
    </location>
</feature>
<feature type="sequence variant" id="VAR_003956" description="In allele FCGR3B*01; dbSNP:rs200688856.">
    <original>S</original>
    <variation>R</variation>
    <location>
        <position position="36"/>
    </location>
</feature>
<feature type="sequence variant" id="VAR_003963" description="In allele FCGR3B*02 and allele FCGR3B*03; dbSNP:rs448740." evidence="6">
    <original>N</original>
    <variation>S</variation>
    <location>
        <position position="65"/>
    </location>
</feature>
<feature type="sequence variant" id="VAR_008802" description="In allele FCGR3B*03; dbSNP:rs5030738." evidence="12">
    <original>A</original>
    <variation>D</variation>
    <location>
        <position position="78"/>
    </location>
</feature>
<feature type="sequence variant" id="VAR_003957" description="In allele FCGR3B*01; dbSNP:rs147574249.">
    <original>N</original>
    <variation>D</variation>
    <location>
        <position position="82"/>
    </location>
</feature>
<feature type="sequence variant" id="VAR_003964" description="In allele FCGR3B*01; dbSNP:rs2290834.">
    <original>I</original>
    <variation>V</variation>
    <location>
        <position position="106"/>
    </location>
</feature>
<feature type="mutagenesis site" description="Abolishes membrane anchoring via glycosylphosphatidylinositol." evidence="7">
    <original>S</original>
    <variation>P</variation>
    <location>
        <position position="203"/>
    </location>
</feature>
<feature type="mutagenesis site" description="Has no effect on membrane anchoring via glycosylphosphatidylinositol." evidence="7">
    <original>S</original>
    <variation>T</variation>
    <variation>Y</variation>
    <variation>A</variation>
    <variation>D</variation>
    <variation>K</variation>
    <location>
        <position position="203"/>
    </location>
</feature>
<feature type="strand" evidence="15">
    <location>
        <begin position="27"/>
        <end position="32"/>
    </location>
</feature>
<feature type="strand" evidence="15">
    <location>
        <begin position="35"/>
        <end position="38"/>
    </location>
</feature>
<feature type="strand" evidence="15">
    <location>
        <begin position="43"/>
        <end position="48"/>
    </location>
</feature>
<feature type="strand" evidence="15">
    <location>
        <begin position="59"/>
        <end position="62"/>
    </location>
</feature>
<feature type="strand" evidence="15">
    <location>
        <begin position="65"/>
        <end position="70"/>
    </location>
</feature>
<feature type="strand" evidence="15">
    <location>
        <begin position="72"/>
        <end position="78"/>
    </location>
</feature>
<feature type="helix" evidence="15">
    <location>
        <begin position="81"/>
        <end position="83"/>
    </location>
</feature>
<feature type="strand" evidence="15">
    <location>
        <begin position="85"/>
        <end position="90"/>
    </location>
</feature>
<feature type="strand" evidence="15">
    <location>
        <begin position="92"/>
        <end position="94"/>
    </location>
</feature>
<feature type="strand" evidence="15">
    <location>
        <begin position="100"/>
        <end position="105"/>
    </location>
</feature>
<feature type="strand" evidence="15">
    <location>
        <begin position="107"/>
        <end position="112"/>
    </location>
</feature>
<feature type="strand" evidence="15">
    <location>
        <begin position="116"/>
        <end position="119"/>
    </location>
</feature>
<feature type="strand" evidence="16">
    <location>
        <begin position="120"/>
        <end position="122"/>
    </location>
</feature>
<feature type="strand" evidence="15">
    <location>
        <begin position="124"/>
        <end position="130"/>
    </location>
</feature>
<feature type="helix" evidence="17">
    <location>
        <begin position="131"/>
        <end position="133"/>
    </location>
</feature>
<feature type="strand" evidence="15">
    <location>
        <begin position="137"/>
        <end position="143"/>
    </location>
</feature>
<feature type="strand" evidence="15">
    <location>
        <begin position="146"/>
        <end position="153"/>
    </location>
</feature>
<feature type="strand" evidence="15">
    <location>
        <begin position="157"/>
        <end position="161"/>
    </location>
</feature>
<feature type="helix" evidence="15">
    <location>
        <begin position="164"/>
        <end position="166"/>
    </location>
</feature>
<feature type="strand" evidence="15">
    <location>
        <begin position="168"/>
        <end position="176"/>
    </location>
</feature>
<feature type="strand" evidence="15">
    <location>
        <begin position="179"/>
        <end position="182"/>
    </location>
</feature>
<feature type="strand" evidence="15">
    <location>
        <begin position="186"/>
        <end position="191"/>
    </location>
</feature>
<gene>
    <name type="primary">FCGR3B</name>
    <name type="synonym">CD16B</name>
    <name type="synonym">FCG3</name>
    <name type="synonym">FCGR3</name>
    <name type="synonym">IGFR3</name>
</gene>
<comment type="function">
    <text>Receptor for the Fc region of immunoglobulins gamma. Low affinity receptor. Binds complexed or aggregated IgG and also monomeric IgG. Contrary to III-A, is not capable to mediate antibody-dependent cytotoxicity and phagocytosis. May serve as a trap for immune complexes in the peripheral circulation which does not activate neutrophils.</text>
</comment>
<comment type="subunit">
    <text evidence="1">Monomer. Interacts with INPP5D/SHIP1 (By similarity).</text>
</comment>
<comment type="subcellular location">
    <subcellularLocation>
        <location evidence="7">Cell membrane</location>
        <topology evidence="7">Lipid-anchor</topology>
        <topology evidence="7">GPI-anchor</topology>
    </subcellularLocation>
    <subcellularLocation>
        <location>Secreted</location>
    </subcellularLocation>
    <text>Secreted after cleavage.</text>
</comment>
<comment type="tissue specificity">
    <text>Expressed specifically by polymorphonuclear leukocytes (neutrophils). Also expressed by stimulated eosinophils.</text>
</comment>
<comment type="PTM">
    <text>Glycosylated. Glycosylation plays an inhibitory role in the interaction with IgG3.</text>
</comment>
<comment type="PTM">
    <text>The soluble form is produced by a proteolytic cleavage.</text>
</comment>
<comment type="polymorphism">
    <text evidence="5 8 9 10 11 12">There are three allelic forms of FCGR3B: FCGR3B*01 (HNA-1a, NA-1), FCGR3B*02 (HNA-1b, NA-2) and FCGR3B*03 (HNA-1c, SH). FCGR3B*01 and FCGR3B*02 are detectable with antibodies against the biallelic neutrophil-specific antigen system NA. The more active FCGR3B*01 allele has been associated with severe renal disease in certain forms of systemic vasculitides.</text>
</comment>
<comment type="miscellaneous">
    <text>Encoded by one of two nearly identical genes: FCGR3A and FCGR3B (Shown here) which are expressed in a tissue-specific manner. The 'Phe-203' in FCGR3A determines the transmembrane domains whereas the Ser-203 in FCGR3B determines the GPI-anchoring.</text>
</comment>
<keyword id="KW-0002">3D-structure</keyword>
<keyword id="KW-1003">Cell membrane</keyword>
<keyword id="KW-1015">Disulfide bond</keyword>
<keyword id="KW-0325">Glycoprotein</keyword>
<keyword id="KW-0336">GPI-anchor</keyword>
<keyword id="KW-0390">IgG-binding protein</keyword>
<keyword id="KW-0393">Immunoglobulin domain</keyword>
<keyword id="KW-0449">Lipoprotein</keyword>
<keyword id="KW-0472">Membrane</keyword>
<keyword id="KW-1267">Proteomics identification</keyword>
<keyword id="KW-0675">Receptor</keyword>
<keyword id="KW-1185">Reference proteome</keyword>
<keyword id="KW-0677">Repeat</keyword>
<keyword id="KW-0964">Secreted</keyword>
<keyword id="KW-0732">Signal</keyword>
<dbReference type="EMBL" id="X16863">
    <property type="protein sequence ID" value="CAA34753.1"/>
    <property type="molecule type" value="mRNA"/>
</dbReference>
<dbReference type="EMBL" id="X07934">
    <property type="protein sequence ID" value="CAA30758.1"/>
    <property type="molecule type" value="mRNA"/>
</dbReference>
<dbReference type="EMBL" id="J04162">
    <property type="protein sequence ID" value="AAA35881.1"/>
    <property type="molecule type" value="mRNA"/>
</dbReference>
<dbReference type="EMBL" id="M24854">
    <property type="protein sequence ID" value="AAA53507.1"/>
    <property type="molecule type" value="mRNA"/>
</dbReference>
<dbReference type="EMBL" id="AJ581669">
    <property type="protein sequence ID" value="CAE46408.1"/>
    <property type="molecule type" value="mRNA"/>
</dbReference>
<dbReference type="EMBL" id="AL451067">
    <property type="status" value="NOT_ANNOTATED_CDS"/>
    <property type="molecule type" value="Genomic_DNA"/>
</dbReference>
<dbReference type="EMBL" id="Z46223">
    <property type="protein sequence ID" value="CAA86296.1"/>
    <property type="molecule type" value="Genomic_DNA"/>
</dbReference>
<dbReference type="CCDS" id="CCDS41433.1"/>
<dbReference type="PIR" id="JU0284">
    <property type="entry name" value="JU0284"/>
</dbReference>
<dbReference type="RefSeq" id="NP_000561.3">
    <property type="nucleotide sequence ID" value="NM_000570.5"/>
</dbReference>
<dbReference type="RefSeq" id="NP_001231682.2">
    <property type="nucleotide sequence ID" value="NM_001244753.2"/>
</dbReference>
<dbReference type="RefSeq" id="NP_001257964.1">
    <property type="nucleotide sequence ID" value="NM_001271035.1"/>
</dbReference>
<dbReference type="RefSeq" id="NP_001257965.1">
    <property type="nucleotide sequence ID" value="NM_001271036.1"/>
</dbReference>
<dbReference type="RefSeq" id="NP_001257966.1">
    <property type="nucleotide sequence ID" value="NM_001271037.1"/>
</dbReference>
<dbReference type="PDB" id="1E4J">
    <property type="method" value="X-ray"/>
    <property type="resolution" value="2.50 A"/>
    <property type="chains" value="A=18-193"/>
</dbReference>
<dbReference type="PDB" id="1E4K">
    <property type="method" value="X-ray"/>
    <property type="resolution" value="3.20 A"/>
    <property type="chains" value="C=18-193"/>
</dbReference>
<dbReference type="PDB" id="1FNL">
    <property type="method" value="X-ray"/>
    <property type="resolution" value="1.80 A"/>
    <property type="chains" value="A=19-192"/>
</dbReference>
<dbReference type="PDB" id="1T83">
    <property type="method" value="X-ray"/>
    <property type="resolution" value="3.00 A"/>
    <property type="chains" value="C=19-194"/>
</dbReference>
<dbReference type="PDB" id="1T89">
    <property type="method" value="X-ray"/>
    <property type="resolution" value="3.50 A"/>
    <property type="chains" value="C=19-194"/>
</dbReference>
<dbReference type="PDB" id="6EAQ">
    <property type="method" value="X-ray"/>
    <property type="resolution" value="2.22 A"/>
    <property type="chains" value="C=19-193"/>
</dbReference>
<dbReference type="PDBsum" id="1E4J"/>
<dbReference type="PDBsum" id="1E4K"/>
<dbReference type="PDBsum" id="1FNL"/>
<dbReference type="PDBsum" id="1T83"/>
<dbReference type="PDBsum" id="1T89"/>
<dbReference type="PDBsum" id="6EAQ"/>
<dbReference type="SMR" id="O75015"/>
<dbReference type="BioGRID" id="108509">
    <property type="interactions" value="49"/>
</dbReference>
<dbReference type="FunCoup" id="O75015">
    <property type="interactions" value="384"/>
</dbReference>
<dbReference type="IntAct" id="O75015">
    <property type="interactions" value="33"/>
</dbReference>
<dbReference type="STRING" id="9606.ENSP00000433642"/>
<dbReference type="BindingDB" id="O75015"/>
<dbReference type="ChEMBL" id="CHEMBL5842"/>
<dbReference type="DrugBank" id="DB00092">
    <property type="generic name" value="Alefacept"/>
</dbReference>
<dbReference type="DrugBank" id="DB00087">
    <property type="generic name" value="Alemtuzumab"/>
</dbReference>
<dbReference type="DrugBank" id="DB06607">
    <property type="generic name" value="Catumaxomab"/>
</dbReference>
<dbReference type="DrugBank" id="DB00002">
    <property type="generic name" value="Cetuximab"/>
</dbReference>
<dbReference type="DrugBank" id="DB00111">
    <property type="generic name" value="Daclizumab"/>
</dbReference>
<dbReference type="DrugBank" id="DB00005">
    <property type="generic name" value="Etanercept"/>
</dbReference>
<dbReference type="DrugBank" id="DB00056">
    <property type="generic name" value="Gemtuzumab ozogamicin"/>
</dbReference>
<dbReference type="DrugBank" id="DB00028">
    <property type="generic name" value="Human immunoglobulin G"/>
</dbReference>
<dbReference type="DrugBank" id="DB00075">
    <property type="generic name" value="Muromonab"/>
</dbReference>
<dbReference type="DrugBank" id="DB00108">
    <property type="generic name" value="Natalizumab"/>
</dbReference>
<dbReference type="DrugBank" id="DB00110">
    <property type="generic name" value="Palivizumab"/>
</dbReference>
<dbReference type="DrugBank" id="DB11767">
    <property type="generic name" value="Sarilumab"/>
</dbReference>
<dbReference type="TCDB" id="8.A.23.2.7">
    <property type="family name" value="the basigin (basigin) family"/>
</dbReference>
<dbReference type="GlyConnect" id="1463">
    <property type="glycosylation" value="2 N-Linked glycans (1 site)"/>
</dbReference>
<dbReference type="GlyConnect" id="3001">
    <property type="glycosylation" value="29 N-Linked glycans"/>
</dbReference>
<dbReference type="GlyCosmos" id="O75015">
    <property type="glycosylation" value="6 sites, 2 glycans"/>
</dbReference>
<dbReference type="GlyGen" id="O75015">
    <property type="glycosylation" value="8 sites, 40 N-linked glycans (2 sites)"/>
</dbReference>
<dbReference type="iPTMnet" id="O75015"/>
<dbReference type="PhosphoSitePlus" id="O75015"/>
<dbReference type="BioMuta" id="FCGR3B"/>
<dbReference type="MassIVE" id="O75015"/>
<dbReference type="PaxDb" id="9606-ENSP00000433642"/>
<dbReference type="PeptideAtlas" id="O75015"/>
<dbReference type="ProteomicsDB" id="49693"/>
<dbReference type="ABCD" id="O75015">
    <property type="antibodies" value="15 sequenced antibodies"/>
</dbReference>
<dbReference type="Antibodypedia" id="10871">
    <property type="antibodies" value="815 antibodies from 26 providers"/>
</dbReference>
<dbReference type="DNASU" id="2215"/>
<dbReference type="Ensembl" id="ENST00000367964.6">
    <property type="protein sequence ID" value="ENSP00000356941.2"/>
    <property type="gene ID" value="ENSG00000162747.13"/>
</dbReference>
<dbReference type="Ensembl" id="ENST00000650385.1">
    <property type="protein sequence ID" value="ENSP00000497461.1"/>
    <property type="gene ID" value="ENSG00000162747.13"/>
</dbReference>
<dbReference type="GeneID" id="2215"/>
<dbReference type="KEGG" id="hsa:2215"/>
<dbReference type="MANE-Select" id="ENST00000650385.1">
    <property type="protein sequence ID" value="ENSP00000497461.1"/>
    <property type="RefSeq nucleotide sequence ID" value="NM_001244753.2"/>
    <property type="RefSeq protein sequence ID" value="NP_001231682.2"/>
</dbReference>
<dbReference type="UCSC" id="uc021pdo.2">
    <property type="organism name" value="human"/>
</dbReference>
<dbReference type="AGR" id="HGNC:3620"/>
<dbReference type="CTD" id="2215"/>
<dbReference type="DisGeNET" id="2215"/>
<dbReference type="GeneCards" id="FCGR3B"/>
<dbReference type="HGNC" id="HGNC:3620">
    <property type="gene designation" value="FCGR3B"/>
</dbReference>
<dbReference type="HPA" id="ENSG00000162747">
    <property type="expression patterns" value="Tissue enhanced (bone marrow, lymphoid tissue)"/>
</dbReference>
<dbReference type="MalaCards" id="FCGR3B"/>
<dbReference type="MIM" id="610665">
    <property type="type" value="gene"/>
</dbReference>
<dbReference type="neXtProt" id="NX_O75015"/>
<dbReference type="OpenTargets" id="ENSG00000162747"/>
<dbReference type="Orphanet" id="464370">
    <property type="disease" value="Neonatal alloimmune neutropenia"/>
</dbReference>
<dbReference type="Orphanet" id="536">
    <property type="disease" value="Systemic lupus erythematosus"/>
</dbReference>
<dbReference type="PharmGKB" id="PA28066"/>
<dbReference type="VEuPathDB" id="HostDB:ENSG00000162747"/>
<dbReference type="eggNOG" id="ENOG502RU1M">
    <property type="taxonomic scope" value="Eukaryota"/>
</dbReference>
<dbReference type="GeneTree" id="ENSGT01050000244808"/>
<dbReference type="HOGENOM" id="CLU_023383_1_0_1"/>
<dbReference type="InParanoid" id="O75015"/>
<dbReference type="OMA" id="FMEGDTM"/>
<dbReference type="OrthoDB" id="8917564at2759"/>
<dbReference type="PAN-GO" id="O75015">
    <property type="GO annotations" value="4 GO annotations based on evolutionary models"/>
</dbReference>
<dbReference type="PhylomeDB" id="O75015"/>
<dbReference type="TreeFam" id="TF335097"/>
<dbReference type="PathwayCommons" id="O75015"/>
<dbReference type="Reactome" id="R-HSA-163125">
    <property type="pathway name" value="Post-translational modification: synthesis of GPI-anchored proteins"/>
</dbReference>
<dbReference type="Reactome" id="R-HSA-6798695">
    <property type="pathway name" value="Neutrophil degranulation"/>
</dbReference>
<dbReference type="SignaLink" id="O75015"/>
<dbReference type="SIGNOR" id="O75015"/>
<dbReference type="BioGRID-ORCS" id="2215">
    <property type="hits" value="8 hits in 1064 CRISPR screens"/>
</dbReference>
<dbReference type="EvolutionaryTrace" id="O75015"/>
<dbReference type="GeneWiki" id="FCGR3B"/>
<dbReference type="GenomeRNAi" id="2215"/>
<dbReference type="Pharos" id="O75015">
    <property type="development level" value="Tbio"/>
</dbReference>
<dbReference type="PRO" id="PR:O75015"/>
<dbReference type="Proteomes" id="UP000005640">
    <property type="component" value="Chromosome 1"/>
</dbReference>
<dbReference type="RNAct" id="O75015">
    <property type="molecule type" value="protein"/>
</dbReference>
<dbReference type="Bgee" id="ENSG00000162747">
    <property type="expression patterns" value="Expressed in blood and 146 other cell types or tissues"/>
</dbReference>
<dbReference type="ExpressionAtlas" id="O75015">
    <property type="expression patterns" value="baseline and differential"/>
</dbReference>
<dbReference type="GO" id="GO:0009897">
    <property type="term" value="C:external side of plasma membrane"/>
    <property type="evidence" value="ECO:0000318"/>
    <property type="project" value="GO_Central"/>
</dbReference>
<dbReference type="GO" id="GO:0070062">
    <property type="term" value="C:extracellular exosome"/>
    <property type="evidence" value="ECO:0007005"/>
    <property type="project" value="UniProtKB"/>
</dbReference>
<dbReference type="GO" id="GO:0005576">
    <property type="term" value="C:extracellular region"/>
    <property type="evidence" value="ECO:0000304"/>
    <property type="project" value="Reactome"/>
</dbReference>
<dbReference type="GO" id="GO:0005886">
    <property type="term" value="C:plasma membrane"/>
    <property type="evidence" value="ECO:0000314"/>
    <property type="project" value="UniProtKB"/>
</dbReference>
<dbReference type="GO" id="GO:0030667">
    <property type="term" value="C:secretory granule membrane"/>
    <property type="evidence" value="ECO:0000304"/>
    <property type="project" value="Reactome"/>
</dbReference>
<dbReference type="GO" id="GO:0034235">
    <property type="term" value="F:GPI anchor binding"/>
    <property type="evidence" value="ECO:0000314"/>
    <property type="project" value="UniProtKB"/>
</dbReference>
<dbReference type="GO" id="GO:0019864">
    <property type="term" value="F:IgG binding"/>
    <property type="evidence" value="ECO:0007669"/>
    <property type="project" value="UniProtKB-KW"/>
</dbReference>
<dbReference type="GO" id="GO:0019770">
    <property type="term" value="F:IgG receptor activity"/>
    <property type="evidence" value="ECO:0000318"/>
    <property type="project" value="GO_Central"/>
</dbReference>
<dbReference type="GO" id="GO:0001788">
    <property type="term" value="P:antibody-dependent cellular cytotoxicity"/>
    <property type="evidence" value="ECO:0000318"/>
    <property type="project" value="GO_Central"/>
</dbReference>
<dbReference type="GO" id="GO:0007166">
    <property type="term" value="P:cell surface receptor signaling pathway"/>
    <property type="evidence" value="ECO:0000318"/>
    <property type="project" value="GO_Central"/>
</dbReference>
<dbReference type="GO" id="GO:0006955">
    <property type="term" value="P:immune response"/>
    <property type="evidence" value="ECO:0000304"/>
    <property type="project" value="ProtInc"/>
</dbReference>
<dbReference type="CDD" id="cd05752">
    <property type="entry name" value="Ig1_FcgammaR_like"/>
    <property type="match status" value="1"/>
</dbReference>
<dbReference type="CDD" id="cd05753">
    <property type="entry name" value="Ig2_FcgammaR_like"/>
    <property type="match status" value="1"/>
</dbReference>
<dbReference type="FunFam" id="2.60.40.10:FF:000217">
    <property type="entry name" value="High affinity immunoglobulin gamma Fc receptor I"/>
    <property type="match status" value="1"/>
</dbReference>
<dbReference type="FunFam" id="2.60.40.10:FF:000356">
    <property type="entry name" value="Low affinity immunoglobulin gamma Fc region receptor III-A"/>
    <property type="match status" value="1"/>
</dbReference>
<dbReference type="Gene3D" id="2.60.40.10">
    <property type="entry name" value="Immunoglobulins"/>
    <property type="match status" value="2"/>
</dbReference>
<dbReference type="InterPro" id="IPR007110">
    <property type="entry name" value="Ig-like_dom"/>
</dbReference>
<dbReference type="InterPro" id="IPR036179">
    <property type="entry name" value="Ig-like_dom_sf"/>
</dbReference>
<dbReference type="InterPro" id="IPR013783">
    <property type="entry name" value="Ig-like_fold"/>
</dbReference>
<dbReference type="InterPro" id="IPR050488">
    <property type="entry name" value="Ig_Fc_receptor"/>
</dbReference>
<dbReference type="InterPro" id="IPR003599">
    <property type="entry name" value="Ig_sub"/>
</dbReference>
<dbReference type="PANTHER" id="PTHR11481">
    <property type="entry name" value="IMMUNOGLOBULIN FC RECEPTOR"/>
    <property type="match status" value="1"/>
</dbReference>
<dbReference type="PANTHER" id="PTHR11481:SF103">
    <property type="entry name" value="LOW AFFINITY IMMUNOGLOBULIN GAMMA FC REGION RECEPTOR III-A-RELATED"/>
    <property type="match status" value="1"/>
</dbReference>
<dbReference type="Pfam" id="PF13895">
    <property type="entry name" value="Ig_2"/>
    <property type="match status" value="2"/>
</dbReference>
<dbReference type="SMART" id="SM00409">
    <property type="entry name" value="IG"/>
    <property type="match status" value="2"/>
</dbReference>
<dbReference type="SUPFAM" id="SSF48726">
    <property type="entry name" value="Immunoglobulin"/>
    <property type="match status" value="2"/>
</dbReference>
<dbReference type="PROSITE" id="PS50835">
    <property type="entry name" value="IG_LIKE"/>
    <property type="match status" value="1"/>
</dbReference>
<sequence>MWQLLLPTALLLLVSAGMRTEDLPKAVVFLEPQWYSVLEKDSVTLKCQGAYSPEDNSTQWFHNENLISSQASSYFIDAATVNDSGEYRCQTNLSTLSDPVQLEVHIGWLLLQAPRWVFKEEDPIHLRCHSWKNTALHKVTYLQNGKDRKYFHHNSDFHIPKATLKDSGSYFCRGLVGSKNVSSETVNITITQGLAVSTISSFSPPGYQVSFCLVMVLLFAVDTGLYFSVKTNI</sequence>
<accession>O75015</accession>
<organism>
    <name type="scientific">Homo sapiens</name>
    <name type="common">Human</name>
    <dbReference type="NCBI Taxonomy" id="9606"/>
    <lineage>
        <taxon>Eukaryota</taxon>
        <taxon>Metazoa</taxon>
        <taxon>Chordata</taxon>
        <taxon>Craniata</taxon>
        <taxon>Vertebrata</taxon>
        <taxon>Euteleostomi</taxon>
        <taxon>Mammalia</taxon>
        <taxon>Eutheria</taxon>
        <taxon>Euarchontoglires</taxon>
        <taxon>Primates</taxon>
        <taxon>Haplorrhini</taxon>
        <taxon>Catarrhini</taxon>
        <taxon>Hominidae</taxon>
        <taxon>Homo</taxon>
    </lineage>
</organism>
<name>FCG3B_HUMAN</name>
<reference key="1">
    <citation type="journal article" date="1989" name="J. Exp. Med.">
        <title>Alternative membrane forms of Fc gamma RIII(CD16) on human natural killer cells and neutrophils. Cell type-specific expression of two genes that differ in single nucleotide substitutions.</title>
        <authorList>
            <person name="Ravetch J.V."/>
            <person name="Perussia B."/>
        </authorList>
    </citation>
    <scope>NUCLEOTIDE SEQUENCE [MRNA] (ALLELE FCGR3B*02)</scope>
    <scope>POLYMORPHISM</scope>
</reference>
<reference key="2">
    <citation type="journal article" date="1988" name="Nature">
        <title>The Fc gamma receptor of natural killer cells is a phospholipid-linked membrane protein.</title>
        <authorList>
            <person name="Simmons D."/>
            <person name="Seed B."/>
        </authorList>
    </citation>
    <scope>NUCLEOTIDE SEQUENCE [MRNA] (ALLELE FCGR3B*02)</scope>
    <scope>POLYMORPHISM</scope>
    <source>
        <tissue>Placenta</tissue>
    </source>
</reference>
<reference key="3">
    <citation type="journal article" date="1989" name="Nature">
        <authorList>
            <person name="Simmons D."/>
            <person name="Seed B."/>
        </authorList>
    </citation>
    <scope>ERRATUM OF PUBMED:2967436</scope>
</reference>
<reference key="4">
    <citation type="journal article" date="1989" name="Proc. Natl. Acad. Sci. U.S.A.">
        <title>Human Fc-gamma-RIII: cloning, expression, and identification of the chromosomal locus of two Fc receptors for IgG.</title>
        <authorList>
            <person name="Peltz G.A."/>
            <person name="Grundy H.O."/>
            <person name="Lebo R.V."/>
            <person name="Yssel H."/>
            <person name="Barsh G.S."/>
            <person name="Moore K.W."/>
        </authorList>
    </citation>
    <scope>NUCLEOTIDE SEQUENCE [MRNA] (ALLELE FCGR3B*01)</scope>
    <scope>POLYMORPHISM</scope>
    <source>
        <tissue>Leukocyte</tissue>
    </source>
</reference>
<reference key="5">
    <citation type="journal article" date="1989" name="Proc. Natl. Acad. Sci. U.S.A.">
        <title>A human immunoglobulin G receptor exists in both polypeptide-anchored and phosphatidylinositol-glycan-anchored forms.</title>
        <authorList>
            <person name="Scallon B.J."/>
            <person name="Scigliano E."/>
            <person name="Freedman V.H."/>
            <person name="Miedel M.C."/>
            <person name="Pan Y.C."/>
            <person name="Unkeless J.C."/>
            <person name="Kochan J.P."/>
        </authorList>
    </citation>
    <scope>NUCLEOTIDE SEQUENCE [MRNA]</scope>
    <scope>VARIANT SER-65</scope>
</reference>
<reference key="6">
    <citation type="journal article" date="2004" name="Tissue Antigens">
        <title>Characterization of human FCGR3B*02 (HNA-1b, NA2) cDNAs and IMGT standardized description of FCGR3B alleles.</title>
        <authorList>
            <person name="Bertrand G."/>
            <person name="Duprat E."/>
            <person name="Lefranc M.-P."/>
            <person name="Marti J."/>
            <person name="Coste J."/>
        </authorList>
    </citation>
    <scope>NUCLEOTIDE SEQUENCE [MRNA] (ALLELE FCGR3B*02)</scope>
    <scope>POLYMORPHISM</scope>
    <source>
        <tissue>Peripheral blood</tissue>
    </source>
</reference>
<reference key="7">
    <citation type="journal article" date="2006" name="Nature">
        <title>The DNA sequence and biological annotation of human chromosome 1.</title>
        <authorList>
            <person name="Gregory S.G."/>
            <person name="Barlow K.F."/>
            <person name="McLay K.E."/>
            <person name="Kaul R."/>
            <person name="Swarbreck D."/>
            <person name="Dunham A."/>
            <person name="Scott C.E."/>
            <person name="Howe K.L."/>
            <person name="Woodfine K."/>
            <person name="Spencer C.C.A."/>
            <person name="Jones M.C."/>
            <person name="Gillson C."/>
            <person name="Searle S."/>
            <person name="Zhou Y."/>
            <person name="Kokocinski F."/>
            <person name="McDonald L."/>
            <person name="Evans R."/>
            <person name="Phillips K."/>
            <person name="Atkinson A."/>
            <person name="Cooper R."/>
            <person name="Jones C."/>
            <person name="Hall R.E."/>
            <person name="Andrews T.D."/>
            <person name="Lloyd C."/>
            <person name="Ainscough R."/>
            <person name="Almeida J.P."/>
            <person name="Ambrose K.D."/>
            <person name="Anderson F."/>
            <person name="Andrew R.W."/>
            <person name="Ashwell R.I.S."/>
            <person name="Aubin K."/>
            <person name="Babbage A.K."/>
            <person name="Bagguley C.L."/>
            <person name="Bailey J."/>
            <person name="Beasley H."/>
            <person name="Bethel G."/>
            <person name="Bird C.P."/>
            <person name="Bray-Allen S."/>
            <person name="Brown J.Y."/>
            <person name="Brown A.J."/>
            <person name="Buckley D."/>
            <person name="Burton J."/>
            <person name="Bye J."/>
            <person name="Carder C."/>
            <person name="Chapman J.C."/>
            <person name="Clark S.Y."/>
            <person name="Clarke G."/>
            <person name="Clee C."/>
            <person name="Cobley V."/>
            <person name="Collier R.E."/>
            <person name="Corby N."/>
            <person name="Coville G.J."/>
            <person name="Davies J."/>
            <person name="Deadman R."/>
            <person name="Dunn M."/>
            <person name="Earthrowl M."/>
            <person name="Ellington A.G."/>
            <person name="Errington H."/>
            <person name="Frankish A."/>
            <person name="Frankland J."/>
            <person name="French L."/>
            <person name="Garner P."/>
            <person name="Garnett J."/>
            <person name="Gay L."/>
            <person name="Ghori M.R.J."/>
            <person name="Gibson R."/>
            <person name="Gilby L.M."/>
            <person name="Gillett W."/>
            <person name="Glithero R.J."/>
            <person name="Grafham D.V."/>
            <person name="Griffiths C."/>
            <person name="Griffiths-Jones S."/>
            <person name="Grocock R."/>
            <person name="Hammond S."/>
            <person name="Harrison E.S.I."/>
            <person name="Hart E."/>
            <person name="Haugen E."/>
            <person name="Heath P.D."/>
            <person name="Holmes S."/>
            <person name="Holt K."/>
            <person name="Howden P.J."/>
            <person name="Hunt A.R."/>
            <person name="Hunt S.E."/>
            <person name="Hunter G."/>
            <person name="Isherwood J."/>
            <person name="James R."/>
            <person name="Johnson C."/>
            <person name="Johnson D."/>
            <person name="Joy A."/>
            <person name="Kay M."/>
            <person name="Kershaw J.K."/>
            <person name="Kibukawa M."/>
            <person name="Kimberley A.M."/>
            <person name="King A."/>
            <person name="Knights A.J."/>
            <person name="Lad H."/>
            <person name="Laird G."/>
            <person name="Lawlor S."/>
            <person name="Leongamornlert D.A."/>
            <person name="Lloyd D.M."/>
            <person name="Loveland J."/>
            <person name="Lovell J."/>
            <person name="Lush M.J."/>
            <person name="Lyne R."/>
            <person name="Martin S."/>
            <person name="Mashreghi-Mohammadi M."/>
            <person name="Matthews L."/>
            <person name="Matthews N.S.W."/>
            <person name="McLaren S."/>
            <person name="Milne S."/>
            <person name="Mistry S."/>
            <person name="Moore M.J.F."/>
            <person name="Nickerson T."/>
            <person name="O'Dell C.N."/>
            <person name="Oliver K."/>
            <person name="Palmeiri A."/>
            <person name="Palmer S.A."/>
            <person name="Parker A."/>
            <person name="Patel D."/>
            <person name="Pearce A.V."/>
            <person name="Peck A.I."/>
            <person name="Pelan S."/>
            <person name="Phelps K."/>
            <person name="Phillimore B.J."/>
            <person name="Plumb R."/>
            <person name="Rajan J."/>
            <person name="Raymond C."/>
            <person name="Rouse G."/>
            <person name="Saenphimmachak C."/>
            <person name="Sehra H.K."/>
            <person name="Sheridan E."/>
            <person name="Shownkeen R."/>
            <person name="Sims S."/>
            <person name="Skuce C.D."/>
            <person name="Smith M."/>
            <person name="Steward C."/>
            <person name="Subramanian S."/>
            <person name="Sycamore N."/>
            <person name="Tracey A."/>
            <person name="Tromans A."/>
            <person name="Van Helmond Z."/>
            <person name="Wall M."/>
            <person name="Wallis J.M."/>
            <person name="White S."/>
            <person name="Whitehead S.L."/>
            <person name="Wilkinson J.E."/>
            <person name="Willey D.L."/>
            <person name="Williams H."/>
            <person name="Wilming L."/>
            <person name="Wray P.W."/>
            <person name="Wu Z."/>
            <person name="Coulson A."/>
            <person name="Vaudin M."/>
            <person name="Sulston J.E."/>
            <person name="Durbin R.M."/>
            <person name="Hubbard T."/>
            <person name="Wooster R."/>
            <person name="Dunham I."/>
            <person name="Carter N.P."/>
            <person name="McVean G."/>
            <person name="Ross M.T."/>
            <person name="Harrow J."/>
            <person name="Olson M.V."/>
            <person name="Beck S."/>
            <person name="Rogers J."/>
            <person name="Bentley D.R."/>
        </authorList>
    </citation>
    <scope>NUCLEOTIDE SEQUENCE [LARGE SCALE GENOMIC DNA]</scope>
</reference>
<reference key="8">
    <citation type="journal article" date="1995" name="J. Biol. Chem.">
        <title>The human low affinity immunoglobulin G Fc receptor III-A and III-B genes. Molecular characterization of the promoter regions.</title>
        <authorList>
            <person name="Gessner J.E."/>
            <person name="Grussenmeyer T."/>
            <person name="Kolanus W."/>
            <person name="Schmidt R.E."/>
        </authorList>
    </citation>
    <scope>NUCLEOTIDE SEQUENCE [GENOMIC DNA] OF 1-72 (ALLELE FCGR3B*02)</scope>
    <scope>POLYMORPHISM</scope>
    <source>
        <tissue>Placenta</tissue>
    </source>
</reference>
<reference key="9">
    <citation type="journal article" date="1991" name="J. Immunol.">
        <title>Analysis of Fc gamma RIII (CD16) membrane expression and association with CD3 zeta and Fc epsilon RI-gamma by site-directed mutation.</title>
        <authorList>
            <person name="Lanier L.L."/>
            <person name="Yu G."/>
            <person name="Phillips J.H."/>
        </authorList>
    </citation>
    <scope>SUBCELLULAR LOCATION</scope>
    <scope>MUTAGENESIS OF SER-203</scope>
</reference>
<reference key="10">
    <citation type="journal article" date="2000" name="Nature">
        <title>The 3.2-A crystal structure of the human IgG1 Fc fragment-Fc gammaRIII complex.</title>
        <authorList>
            <person name="Sondermann P."/>
            <person name="Huber R."/>
            <person name="Oosthuizen V."/>
            <person name="Jacob U."/>
        </authorList>
    </citation>
    <scope>X-RAY CRYSTALLOGRAPHY (3.2 ANGSTROMS) IN COMPLEX WITH IGG1 FC</scope>
    <scope>DISULFIDE BOND</scope>
</reference>
<reference key="11">
    <citation type="journal article" date="2000" name="Immunity">
        <title>Crystal structure of the extracellular domain of a human Fc gamma RIII.</title>
        <authorList>
            <person name="Zhang Y."/>
            <person name="Boesen C.C."/>
            <person name="Radaev S."/>
            <person name="Brooks A.G."/>
            <person name="Fridman W.H."/>
            <person name="Sautes-Fridman C."/>
            <person name="Sun P.D."/>
        </authorList>
    </citation>
    <scope>X-RAY CRYSTALLOGRAPHY (1.80 ANGSTROMS) OF 19-192</scope>
    <scope>DISULFIDE BONDS</scope>
</reference>
<reference key="12">
    <citation type="journal article" date="1997" name="Blood">
        <title>Characterization of a new alloantigen (SH) on the human neutrophil Fc gamma receptor IIIb.</title>
        <authorList>
            <person name="Bux J."/>
            <person name="Stein E.L."/>
            <person name="Bierling P."/>
            <person name="Fromont P."/>
            <person name="Clay M."/>
            <person name="Stroncek D."/>
            <person name="Santoso S."/>
        </authorList>
    </citation>
    <scope>POLYMORPHISM</scope>
    <scope>VARIANT FCGR3B*03 ASP-78</scope>
</reference>
<evidence type="ECO:0000250" key="1"/>
<evidence type="ECO:0000255" key="2"/>
<evidence type="ECO:0000269" key="3">
    <source>
    </source>
</evidence>
<evidence type="ECO:0000269" key="4">
    <source>
    </source>
</evidence>
<evidence type="ECO:0000269" key="5">
    <source>
    </source>
</evidence>
<evidence type="ECO:0000269" key="6">
    <source>
    </source>
</evidence>
<evidence type="ECO:0000269" key="7">
    <source>
    </source>
</evidence>
<evidence type="ECO:0000269" key="8">
    <source>
    </source>
</evidence>
<evidence type="ECO:0000269" key="9">
    <source>
    </source>
</evidence>
<evidence type="ECO:0000269" key="10">
    <source>
    </source>
</evidence>
<evidence type="ECO:0000269" key="11">
    <source>
    </source>
</evidence>
<evidence type="ECO:0000269" key="12">
    <source>
    </source>
</evidence>
<evidence type="ECO:0000303" key="13">
    <source>
    </source>
</evidence>
<evidence type="ECO:0007744" key="14">
    <source>
        <dbReference type="PDB" id="1FNL"/>
    </source>
</evidence>
<evidence type="ECO:0007829" key="15">
    <source>
        <dbReference type="PDB" id="1FNL"/>
    </source>
</evidence>
<evidence type="ECO:0007829" key="16">
    <source>
        <dbReference type="PDB" id="1T89"/>
    </source>
</evidence>
<evidence type="ECO:0007829" key="17">
    <source>
        <dbReference type="PDB" id="6EAQ"/>
    </source>
</evidence>